<protein>
    <recommendedName>
        <fullName evidence="2">Small ribosomal subunit protein uS12</fullName>
    </recommendedName>
    <alternativeName>
        <fullName evidence="3">30S ribosomal protein S12</fullName>
    </alternativeName>
</protein>
<feature type="chain" id="PRO_1000049790" description="Small ribosomal subunit protein uS12">
    <location>
        <begin position="1"/>
        <end position="124"/>
    </location>
</feature>
<feature type="modified residue" description="3-methylthioaspartic acid" evidence="1">
    <location>
        <position position="89"/>
    </location>
</feature>
<sequence>MATINQLVRKPRARKVAKSNVPALEACPQKRGVCTRVYTTTPKKPNSALRKVCRVRLTNGFEVTSYIGGEGHNLQEHSVILIRGGRVKDLPGVRYHTVRGALDCSGVKDRKQARSKYGVKRPKA</sequence>
<evidence type="ECO:0000250" key="1"/>
<evidence type="ECO:0000255" key="2">
    <source>
        <dbReference type="HAMAP-Rule" id="MF_00403"/>
    </source>
</evidence>
<evidence type="ECO:0000305" key="3"/>
<dbReference type="EMBL" id="CP000647">
    <property type="protein sequence ID" value="ABR79114.1"/>
    <property type="molecule type" value="Genomic_DNA"/>
</dbReference>
<dbReference type="RefSeq" id="WP_002920115.1">
    <property type="nucleotide sequence ID" value="NC_009648.1"/>
</dbReference>
<dbReference type="SMR" id="A6TEY0"/>
<dbReference type="STRING" id="272620.KPN_03727"/>
<dbReference type="jPOST" id="A6TEY0"/>
<dbReference type="PaxDb" id="272620-KPN_03727"/>
<dbReference type="EnsemblBacteria" id="ABR79114">
    <property type="protein sequence ID" value="ABR79114"/>
    <property type="gene ID" value="KPN_03727"/>
</dbReference>
<dbReference type="GeneID" id="97393159"/>
<dbReference type="KEGG" id="kpn:KPN_03727"/>
<dbReference type="HOGENOM" id="CLU_104295_1_2_6"/>
<dbReference type="Proteomes" id="UP000000265">
    <property type="component" value="Chromosome"/>
</dbReference>
<dbReference type="GO" id="GO:0015935">
    <property type="term" value="C:small ribosomal subunit"/>
    <property type="evidence" value="ECO:0007669"/>
    <property type="project" value="InterPro"/>
</dbReference>
<dbReference type="GO" id="GO:0019843">
    <property type="term" value="F:rRNA binding"/>
    <property type="evidence" value="ECO:0007669"/>
    <property type="project" value="UniProtKB-UniRule"/>
</dbReference>
<dbReference type="GO" id="GO:0003735">
    <property type="term" value="F:structural constituent of ribosome"/>
    <property type="evidence" value="ECO:0007669"/>
    <property type="project" value="InterPro"/>
</dbReference>
<dbReference type="GO" id="GO:0000049">
    <property type="term" value="F:tRNA binding"/>
    <property type="evidence" value="ECO:0007669"/>
    <property type="project" value="UniProtKB-UniRule"/>
</dbReference>
<dbReference type="GO" id="GO:0006412">
    <property type="term" value="P:translation"/>
    <property type="evidence" value="ECO:0007669"/>
    <property type="project" value="UniProtKB-UniRule"/>
</dbReference>
<dbReference type="CDD" id="cd03368">
    <property type="entry name" value="Ribosomal_S12"/>
    <property type="match status" value="1"/>
</dbReference>
<dbReference type="FunFam" id="2.40.50.140:FF:000001">
    <property type="entry name" value="30S ribosomal protein S12"/>
    <property type="match status" value="1"/>
</dbReference>
<dbReference type="Gene3D" id="2.40.50.140">
    <property type="entry name" value="Nucleic acid-binding proteins"/>
    <property type="match status" value="1"/>
</dbReference>
<dbReference type="HAMAP" id="MF_00403_B">
    <property type="entry name" value="Ribosomal_uS12_B"/>
    <property type="match status" value="1"/>
</dbReference>
<dbReference type="InterPro" id="IPR012340">
    <property type="entry name" value="NA-bd_OB-fold"/>
</dbReference>
<dbReference type="InterPro" id="IPR006032">
    <property type="entry name" value="Ribosomal_uS12"/>
</dbReference>
<dbReference type="InterPro" id="IPR005679">
    <property type="entry name" value="Ribosomal_uS12_bac"/>
</dbReference>
<dbReference type="NCBIfam" id="TIGR00981">
    <property type="entry name" value="rpsL_bact"/>
    <property type="match status" value="1"/>
</dbReference>
<dbReference type="PANTHER" id="PTHR11652">
    <property type="entry name" value="30S RIBOSOMAL PROTEIN S12 FAMILY MEMBER"/>
    <property type="match status" value="1"/>
</dbReference>
<dbReference type="Pfam" id="PF00164">
    <property type="entry name" value="Ribosom_S12_S23"/>
    <property type="match status" value="1"/>
</dbReference>
<dbReference type="PIRSF" id="PIRSF002133">
    <property type="entry name" value="Ribosomal_S12/S23"/>
    <property type="match status" value="1"/>
</dbReference>
<dbReference type="PRINTS" id="PR01034">
    <property type="entry name" value="RIBOSOMALS12"/>
</dbReference>
<dbReference type="SUPFAM" id="SSF50249">
    <property type="entry name" value="Nucleic acid-binding proteins"/>
    <property type="match status" value="1"/>
</dbReference>
<dbReference type="PROSITE" id="PS00055">
    <property type="entry name" value="RIBOSOMAL_S12"/>
    <property type="match status" value="1"/>
</dbReference>
<name>RS12_KLEP7</name>
<gene>
    <name evidence="2" type="primary">rpsL</name>
    <name type="ordered locus">KPN78578_36900</name>
    <name type="ORF">KPN_03727</name>
</gene>
<organism>
    <name type="scientific">Klebsiella pneumoniae subsp. pneumoniae (strain ATCC 700721 / MGH 78578)</name>
    <dbReference type="NCBI Taxonomy" id="272620"/>
    <lineage>
        <taxon>Bacteria</taxon>
        <taxon>Pseudomonadati</taxon>
        <taxon>Pseudomonadota</taxon>
        <taxon>Gammaproteobacteria</taxon>
        <taxon>Enterobacterales</taxon>
        <taxon>Enterobacteriaceae</taxon>
        <taxon>Klebsiella/Raoultella group</taxon>
        <taxon>Klebsiella</taxon>
        <taxon>Klebsiella pneumoniae complex</taxon>
    </lineage>
</organism>
<keyword id="KW-0488">Methylation</keyword>
<keyword id="KW-0687">Ribonucleoprotein</keyword>
<keyword id="KW-0689">Ribosomal protein</keyword>
<keyword id="KW-0694">RNA-binding</keyword>
<keyword id="KW-0699">rRNA-binding</keyword>
<keyword id="KW-0820">tRNA-binding</keyword>
<reference key="1">
    <citation type="submission" date="2006-09" db="EMBL/GenBank/DDBJ databases">
        <authorList>
            <consortium name="The Klebsiella pneumonia Genome Sequencing Project"/>
            <person name="McClelland M."/>
            <person name="Sanderson E.K."/>
            <person name="Spieth J."/>
            <person name="Clifton W.S."/>
            <person name="Latreille P."/>
            <person name="Sabo A."/>
            <person name="Pepin K."/>
            <person name="Bhonagiri V."/>
            <person name="Porwollik S."/>
            <person name="Ali J."/>
            <person name="Wilson R.K."/>
        </authorList>
    </citation>
    <scope>NUCLEOTIDE SEQUENCE [LARGE SCALE GENOMIC DNA]</scope>
    <source>
        <strain>ATCC 700721 / MGH 78578</strain>
    </source>
</reference>
<accession>A6TEY0</accession>
<proteinExistence type="inferred from homology"/>
<comment type="function">
    <text evidence="2">With S4 and S5 plays an important role in translational accuracy.</text>
</comment>
<comment type="function">
    <text evidence="2">Interacts with and stabilizes bases of the 16S rRNA that are involved in tRNA selection in the A site and with the mRNA backbone. Located at the interface of the 30S and 50S subunits, it traverses the body of the 30S subunit contacting proteins on the other side and probably holding the rRNA structure together. The combined cluster of proteins S8, S12 and S17 appears to hold together the shoulder and platform of the 30S subunit.</text>
</comment>
<comment type="subunit">
    <text evidence="2">Part of the 30S ribosomal subunit. Contacts proteins S8 and S17. May interact with IF1 in the 30S initiation complex.</text>
</comment>
<comment type="similarity">
    <text evidence="2">Belongs to the universal ribosomal protein uS12 family.</text>
</comment>